<accession>G0SHF3</accession>
<reference key="1">
    <citation type="journal article" date="2011" name="Cell">
        <title>Insight into structure and assembly of the nuclear pore complex by utilizing the genome of a eukaryotic thermophile.</title>
        <authorList>
            <person name="Amlacher S."/>
            <person name="Sarges P."/>
            <person name="Flemming D."/>
            <person name="van Noort V."/>
            <person name="Kunze R."/>
            <person name="Devos D.P."/>
            <person name="Arumugam M."/>
            <person name="Bork P."/>
            <person name="Hurt E."/>
        </authorList>
    </citation>
    <scope>NUCLEOTIDE SEQUENCE [LARGE SCALE GENOMIC DNA]</scope>
    <source>
        <strain>DSM 1495 / CBS 144.50 / IMI 039719</strain>
    </source>
</reference>
<reference key="2">
    <citation type="journal article" date="2021" name="Cell Rep.">
        <title>Integrative structure of a 10-megadalton eukaryotic pyruvate dehydrogenase complex from native cell extracts.</title>
        <authorList>
            <person name="Kyrilis F.L."/>
            <person name="Semchonok D.A."/>
            <person name="Skalidis I."/>
            <person name="Tueting C."/>
            <person name="Hamdi F."/>
            <person name="O'Reilly F.J."/>
            <person name="Rappsilber J."/>
            <person name="Kastritis P.L."/>
        </authorList>
    </citation>
    <scope>FUNCTION</scope>
    <scope>CATALYTIC ACTIVITY</scope>
    <scope>SUBUNIT</scope>
</reference>
<reference key="3">
    <citation type="journal article" date="2021" name="Nat. Commun.">
        <title>Cryo-EM snapshots of a native lysate provide structural insights into a metabolon-embedded transacetylase reaction.</title>
        <authorList>
            <person name="Tueting C."/>
            <person name="Kyrilis F.L."/>
            <person name="Mueller J."/>
            <person name="Sorokina M."/>
            <person name="Skalidis I."/>
            <person name="Hamdi F."/>
            <person name="Sadian Y."/>
            <person name="Kastritis P.L."/>
        </authorList>
    </citation>
    <scope>FUNCTION</scope>
    <scope>CATALYTIC ACTIVITY</scope>
    <scope>BIOPHYSICOCHEMICAL PROPERTIES</scope>
</reference>
<evidence type="ECO:0000250" key="1">
    <source>
        <dbReference type="UniProtKB" id="P08559"/>
    </source>
</evidence>
<evidence type="ECO:0000255" key="2"/>
<evidence type="ECO:0000269" key="3">
    <source>
    </source>
</evidence>
<evidence type="ECO:0000269" key="4">
    <source>
    </source>
</evidence>
<evidence type="ECO:0000303" key="5">
    <source>
    </source>
</evidence>
<evidence type="ECO:0000305" key="6"/>
<evidence type="ECO:0000305" key="7">
    <source>
    </source>
</evidence>
<name>ODPA_CHATD</name>
<gene>
    <name type="ORF">CTHT_0069820</name>
</gene>
<dbReference type="EC" id="1.2.4.1" evidence="3 4"/>
<dbReference type="EMBL" id="GL988047">
    <property type="protein sequence ID" value="EGS17642.1"/>
    <property type="molecule type" value="Genomic_DNA"/>
</dbReference>
<dbReference type="RefSeq" id="XP_006697260.1">
    <property type="nucleotide sequence ID" value="XM_006697197.1"/>
</dbReference>
<dbReference type="SMR" id="G0SHF3"/>
<dbReference type="STRING" id="759272.G0SHF3"/>
<dbReference type="GeneID" id="18261020"/>
<dbReference type="KEGG" id="cthr:CTHT_0069820"/>
<dbReference type="eggNOG" id="KOG0225">
    <property type="taxonomic scope" value="Eukaryota"/>
</dbReference>
<dbReference type="HOGENOM" id="CLU_029393_5_2_1"/>
<dbReference type="OMA" id="LGYEMPC"/>
<dbReference type="OrthoDB" id="10256198at2759"/>
<dbReference type="Proteomes" id="UP000008066">
    <property type="component" value="Unassembled WGS sequence"/>
</dbReference>
<dbReference type="GO" id="GO:0005739">
    <property type="term" value="C:mitochondrion"/>
    <property type="evidence" value="ECO:0007669"/>
    <property type="project" value="UniProtKB-SubCell"/>
</dbReference>
<dbReference type="GO" id="GO:0046872">
    <property type="term" value="F:metal ion binding"/>
    <property type="evidence" value="ECO:0007669"/>
    <property type="project" value="UniProtKB-KW"/>
</dbReference>
<dbReference type="GO" id="GO:0004739">
    <property type="term" value="F:pyruvate dehydrogenase (acetyl-transferring) activity"/>
    <property type="evidence" value="ECO:0007669"/>
    <property type="project" value="UniProtKB-EC"/>
</dbReference>
<dbReference type="GO" id="GO:0006086">
    <property type="term" value="P:pyruvate decarboxylation to acetyl-CoA"/>
    <property type="evidence" value="ECO:0007669"/>
    <property type="project" value="InterPro"/>
</dbReference>
<dbReference type="CDD" id="cd02000">
    <property type="entry name" value="TPP_E1_PDC_ADC_BCADC"/>
    <property type="match status" value="1"/>
</dbReference>
<dbReference type="FunFam" id="3.40.50.970:FF:000013">
    <property type="entry name" value="Pyruvate dehydrogenase E1 component subunit alpha"/>
    <property type="match status" value="1"/>
</dbReference>
<dbReference type="Gene3D" id="3.40.50.970">
    <property type="match status" value="1"/>
</dbReference>
<dbReference type="InterPro" id="IPR001017">
    <property type="entry name" value="DH_E1"/>
</dbReference>
<dbReference type="InterPro" id="IPR050642">
    <property type="entry name" value="PDH_E1_Alpha_Subunit"/>
</dbReference>
<dbReference type="InterPro" id="IPR017597">
    <property type="entry name" value="Pyrv_DH_E1_asu_subgrp-y"/>
</dbReference>
<dbReference type="InterPro" id="IPR029061">
    <property type="entry name" value="THDP-binding"/>
</dbReference>
<dbReference type="NCBIfam" id="TIGR03182">
    <property type="entry name" value="PDH_E1_alph_y"/>
    <property type="match status" value="1"/>
</dbReference>
<dbReference type="PANTHER" id="PTHR11516:SF60">
    <property type="entry name" value="PYRUVATE DEHYDROGENASE E1 COMPONENT SUBUNIT ALPHA"/>
    <property type="match status" value="1"/>
</dbReference>
<dbReference type="PANTHER" id="PTHR11516">
    <property type="entry name" value="PYRUVATE DEHYDROGENASE E1 COMPONENT, ALPHA SUBUNIT BACTERIAL AND ORGANELLAR"/>
    <property type="match status" value="1"/>
</dbReference>
<dbReference type="Pfam" id="PF00676">
    <property type="entry name" value="E1_dh"/>
    <property type="match status" value="1"/>
</dbReference>
<dbReference type="SUPFAM" id="SSF52518">
    <property type="entry name" value="Thiamin diphosphate-binding fold (THDP-binding)"/>
    <property type="match status" value="1"/>
</dbReference>
<keyword id="KW-0460">Magnesium</keyword>
<keyword id="KW-0479">Metal-binding</keyword>
<keyword id="KW-0496">Mitochondrion</keyword>
<keyword id="KW-0560">Oxidoreductase</keyword>
<keyword id="KW-0670">Pyruvate</keyword>
<keyword id="KW-1185">Reference proteome</keyword>
<keyword id="KW-0786">Thiamine pyrophosphate</keyword>
<keyword id="KW-0809">Transit peptide</keyword>
<feature type="transit peptide" description="Mitochondrion" evidence="2">
    <location>
        <begin position="1"/>
        <end position="29"/>
    </location>
</feature>
<feature type="chain" id="PRO_0000456220" description="Pyruvate dehydrogenase E1 component subunit alpha, mitochondrial" evidence="2">
    <location>
        <begin position="30"/>
        <end position="411"/>
    </location>
</feature>
<feature type="binding site" evidence="1">
    <location>
        <position position="111"/>
    </location>
    <ligand>
        <name>pyruvate</name>
        <dbReference type="ChEBI" id="CHEBI:15361"/>
    </ligand>
</feature>
<feature type="binding site" evidence="1">
    <location>
        <position position="137"/>
    </location>
    <ligand>
        <name>pyruvate</name>
        <dbReference type="ChEBI" id="CHEBI:15361"/>
    </ligand>
</feature>
<feature type="binding site" evidence="1">
    <location>
        <position position="137"/>
    </location>
    <ligand>
        <name>thiamine diphosphate</name>
        <dbReference type="ChEBI" id="CHEBI:58937"/>
        <note>ligand shared with beta subunit</note>
    </ligand>
</feature>
<feature type="binding site" evidence="1">
    <location>
        <position position="138"/>
    </location>
    <ligand>
        <name>pyruvate</name>
        <dbReference type="ChEBI" id="CHEBI:15361"/>
    </ligand>
</feature>
<feature type="binding site" evidence="1">
    <location>
        <position position="138"/>
    </location>
    <ligand>
        <name>thiamine diphosphate</name>
        <dbReference type="ChEBI" id="CHEBI:58937"/>
        <note>ligand shared with beta subunit</note>
    </ligand>
</feature>
<feature type="binding site" evidence="1">
    <location>
        <position position="184"/>
    </location>
    <ligand>
        <name>pyruvate</name>
        <dbReference type="ChEBI" id="CHEBI:15361"/>
    </ligand>
</feature>
<feature type="binding site" evidence="1">
    <location>
        <position position="184"/>
    </location>
    <ligand>
        <name>thiamine diphosphate</name>
        <dbReference type="ChEBI" id="CHEBI:58937"/>
        <note>ligand shared with beta subunit</note>
    </ligand>
</feature>
<feature type="binding site" evidence="1">
    <location>
        <position position="186"/>
    </location>
    <ligand>
        <name>pyruvate</name>
        <dbReference type="ChEBI" id="CHEBI:15361"/>
    </ligand>
</feature>
<feature type="binding site" evidence="1">
    <location>
        <position position="186"/>
    </location>
    <ligand>
        <name>thiamine diphosphate</name>
        <dbReference type="ChEBI" id="CHEBI:58937"/>
        <note>ligand shared with beta subunit</note>
    </ligand>
</feature>
<feature type="binding site" evidence="1">
    <location>
        <position position="215"/>
    </location>
    <ligand>
        <name>Mg(2+)</name>
        <dbReference type="ChEBI" id="CHEBI:18420"/>
    </ligand>
</feature>
<feature type="binding site" evidence="1">
    <location>
        <position position="215"/>
    </location>
    <ligand>
        <name>pyruvate</name>
        <dbReference type="ChEBI" id="CHEBI:15361"/>
    </ligand>
</feature>
<feature type="binding site" evidence="1">
    <location>
        <position position="215"/>
    </location>
    <ligand>
        <name>thiamine diphosphate</name>
        <dbReference type="ChEBI" id="CHEBI:58937"/>
        <note>ligand shared with beta subunit</note>
    </ligand>
</feature>
<feature type="binding site" evidence="1">
    <location>
        <position position="216"/>
    </location>
    <ligand>
        <name>pyruvate</name>
        <dbReference type="ChEBI" id="CHEBI:15361"/>
    </ligand>
</feature>
<feature type="binding site" evidence="1">
    <location>
        <position position="216"/>
    </location>
    <ligand>
        <name>thiamine diphosphate</name>
        <dbReference type="ChEBI" id="CHEBI:58937"/>
        <note>ligand shared with beta subunit</note>
    </ligand>
</feature>
<feature type="binding site" evidence="1">
    <location>
        <position position="217"/>
    </location>
    <ligand>
        <name>pyruvate</name>
        <dbReference type="ChEBI" id="CHEBI:15361"/>
    </ligand>
</feature>
<feature type="binding site" evidence="1">
    <location>
        <position position="217"/>
    </location>
    <ligand>
        <name>thiamine diphosphate</name>
        <dbReference type="ChEBI" id="CHEBI:58937"/>
        <note>ligand shared with beta subunit</note>
    </ligand>
</feature>
<feature type="binding site" evidence="1">
    <location>
        <position position="244"/>
    </location>
    <ligand>
        <name>Mg(2+)</name>
        <dbReference type="ChEBI" id="CHEBI:18420"/>
    </ligand>
</feature>
<feature type="binding site" evidence="1">
    <location>
        <position position="244"/>
    </location>
    <ligand>
        <name>pyruvate</name>
        <dbReference type="ChEBI" id="CHEBI:15361"/>
    </ligand>
</feature>
<feature type="binding site" evidence="1">
    <location>
        <position position="244"/>
    </location>
    <ligand>
        <name>thiamine diphosphate</name>
        <dbReference type="ChEBI" id="CHEBI:58937"/>
        <note>ligand shared with beta subunit</note>
    </ligand>
</feature>
<feature type="binding site" evidence="1">
    <location>
        <position position="246"/>
    </location>
    <ligand>
        <name>Mg(2+)</name>
        <dbReference type="ChEBI" id="CHEBI:18420"/>
    </ligand>
</feature>
<feature type="binding site" evidence="1">
    <location>
        <position position="246"/>
    </location>
    <ligand>
        <name>pyruvate</name>
        <dbReference type="ChEBI" id="CHEBI:15361"/>
    </ligand>
</feature>
<feature type="binding site" evidence="1">
    <location>
        <position position="311"/>
    </location>
    <ligand>
        <name>thiamine diphosphate</name>
        <dbReference type="ChEBI" id="CHEBI:58937"/>
        <note>ligand shared with beta subunit</note>
    </ligand>
</feature>
<comment type="function">
    <text evidence="3 4 7">The 10-megadalton pyruvate dehydrogenase complex contains multiple copies of three enzymatic components: pyruvate dehydrogenase (E1), dihydrolipoamide acetyltransferase (E2) and lipoamide dehydrogenase (E3) and catalyzes the overall oxidative decarboxylation of pyruvate to form acetyl-CoA and CO(2) (PubMed:33567276, PubMed:34836937). Within the complex, pyruvate and thiamine pyrophosphate (TPP or vitamin B1) are bound by pyruvate dehydrogenase E1 subunits alpha and beta and pyruvate is decarboxylated leading to the 2-carbon hydrohyethyl bound to TPP. The E2 component contains covalently-bound lipoyl cofactors and transfers the hydroxyethyl group from TPP to an oxidized form of covalently bound lipoamide, and the resulting acetyl group is then transferred to free coenzyme A to form acetyl-CoA and reduced dihydrolipoamide-E2. Finally, the flavoprotein dihydrolipoamide dehydrogenase (E3) re-oxidizes the lipoyl group of dihydrolipoamide-E2 to form lipoamide-E2 and NADH. A fourth subunit, E3BP, is responsible for tethering E3 in proximity to the core, forming the entire metabolon (Probable).</text>
</comment>
<comment type="catalytic activity">
    <reaction evidence="3 4">
        <text>N(6)-[(R)-lipoyl]-L-lysyl-[protein] + pyruvate + H(+) = N(6)-[(R)-S(8)-acetyldihydrolipoyl]-L-lysyl-[protein] + CO2</text>
        <dbReference type="Rhea" id="RHEA:19189"/>
        <dbReference type="Rhea" id="RHEA-COMP:10474"/>
        <dbReference type="Rhea" id="RHEA-COMP:10478"/>
        <dbReference type="ChEBI" id="CHEBI:15361"/>
        <dbReference type="ChEBI" id="CHEBI:15378"/>
        <dbReference type="ChEBI" id="CHEBI:16526"/>
        <dbReference type="ChEBI" id="CHEBI:83099"/>
        <dbReference type="ChEBI" id="CHEBI:83111"/>
        <dbReference type="EC" id="1.2.4.1"/>
    </reaction>
    <physiologicalReaction direction="left-to-right" evidence="3 4">
        <dbReference type="Rhea" id="RHEA:19190"/>
    </physiologicalReaction>
</comment>
<comment type="cofactor">
    <cofactor evidence="1">
        <name>thiamine diphosphate</name>
        <dbReference type="ChEBI" id="CHEBI:58937"/>
    </cofactor>
    <cofactor evidence="1">
        <name>Mg(2+)</name>
        <dbReference type="ChEBI" id="CHEBI:18420"/>
    </cofactor>
</comment>
<comment type="biophysicochemical properties">
    <kinetics>
        <KM evidence="4">148 uM for pyruvate</KM>
    </kinetics>
</comment>
<comment type="subunit">
    <text evidence="3">Eukaryotic pyruvate dehydrogenase (PDH) complexes are organized as a core consisting of the oligomeric dihydrolipoamide acetyl-transferase (E2), around which are arranged multiple copies of pyruvate dehydrogenase (E1), dihydrolipoamide dehydrogenase (E3) and protein X (E3BP) bound by non-covalent bonds (PubMed:33567276). The Chaetomium thermophilum PDH complex contains 60 E2 units, 12 E3BP units, about 20 E1 units, and 12 or more E3 units (PubMed:33567276). The units are organized in 1 E2 60-mer, 4 E3BP trimers, about 20 E1 tetramers, and a maximum of 12 E3 dimers (PubMed:33567276). Pyruvate dehydrogenase (E1) is active as a tetramer of 2 alpha and 2 beta subunits (PubMed:33567276). The E3BP trimers are bound inside the icosahedral core with tetrahedral symmetry (PubMed:33567276).</text>
</comment>
<comment type="subcellular location">
    <subcellularLocation>
        <location evidence="2">Mitochondrion</location>
    </subcellularLocation>
</comment>
<protein>
    <recommendedName>
        <fullName evidence="5">Pyruvate dehydrogenase E1 component subunit alpha, mitochondrial</fullName>
        <ecNumber evidence="3 4">1.2.4.1</ecNumber>
    </recommendedName>
    <alternativeName>
        <fullName evidence="5">Pyruvate dehydrogenase complex component E1 alpha</fullName>
        <shortName evidence="6">PDHE1-A</shortName>
    </alternativeName>
</protein>
<sequence length="411" mass="45481">MFSRAVRLSRAALPIRVASQRVPIAARRSVTTNAAQAQVDKSTIPESEDEPFTIRLSDESFETYELDPPPYTLEVTKKQLKQMYYDMVVVRQMEMAADRLYKEKKIRGFCHLSVGQEAVAVGVEHAIEKTDDVITSYRCHGFAYMRGGTVRSIIGELLGRREGIAYGKGGSMHMFTKGFYGGNGIVGAQVPVGAGLAFAQKYTGGKKATVILYGDGASNQGQVFEAFNMAKLWNLPALFGCENNKYGMGTSAARSSALTDYYKRGQYIPGLKVNGMDVLAVKAAVQYGKQWTVEGNGPLVLEYVTYRYGGHSMSDPGTTYRTREEIQRMRSTNDPIAGLKQRIINWGVATEEEVKGIDKAARAHVNEEVAAAEAMAPPEPTAKILFEDIYVKGTEPRYIRGRTLDEVYYFN</sequence>
<organism>
    <name type="scientific">Chaetomium thermophilum (strain DSM 1495 / CBS 144.50 / IMI 039719)</name>
    <name type="common">Thermochaetoides thermophila</name>
    <dbReference type="NCBI Taxonomy" id="759272"/>
    <lineage>
        <taxon>Eukaryota</taxon>
        <taxon>Fungi</taxon>
        <taxon>Dikarya</taxon>
        <taxon>Ascomycota</taxon>
        <taxon>Pezizomycotina</taxon>
        <taxon>Sordariomycetes</taxon>
        <taxon>Sordariomycetidae</taxon>
        <taxon>Sordariales</taxon>
        <taxon>Chaetomiaceae</taxon>
        <taxon>Thermochaetoides</taxon>
    </lineage>
</organism>
<proteinExistence type="evidence at protein level"/>